<reference key="1">
    <citation type="journal article" date="1989" name="EMBO J.">
        <title>Human IgG Fc receptor (hFcRII; CD32) exists as multiple isoforms in macrophages, lymphocytes and IgG-transporting placental epithelium.</title>
        <authorList>
            <person name="Stuart S.G."/>
            <person name="Simister N.E."/>
            <person name="Clarkson S.B."/>
            <person name="Kacinski B.M."/>
            <person name="Shapiro M."/>
            <person name="Mellman I."/>
        </authorList>
    </citation>
    <scope>NUCLEOTIDE SEQUENCE [MRNA] (ISOFORM IIC1)</scope>
    <source>
        <tissue>Placenta</tissue>
    </source>
</reference>
<reference key="2">
    <citation type="journal article" date="1998" name="Blood">
        <title>Expression of functional CD32 molecules on human NK cells is determined by an allelic polymorphism of the FcgammaRIIC gene.</title>
        <authorList>
            <person name="Metes D."/>
            <person name="Ernst L.K."/>
            <person name="Chambers W.H."/>
            <person name="Sulica A."/>
            <person name="Herberman R.B."/>
            <person name="Morel P.A."/>
        </authorList>
    </citation>
    <scope>NUCLEOTIDE SEQUENCE [MRNA] (ISOFORMS IIC1; IIC2; IIC3 AND IIC4)</scope>
    <source>
        <tissue>Natural killer cell</tissue>
    </source>
</reference>
<reference key="3">
    <citation type="journal article" date="1996" name="Mol. Cell. Biol.">
        <title>In vivo and in vitro specificity of protein tyrosine kinases for immunoglobulin G receptor (FcgammaRII) phosphorylation.</title>
        <authorList>
            <person name="Bewarder N."/>
            <person name="Weinrich V."/>
            <person name="Budde P."/>
            <person name="Hartmann D."/>
            <person name="Flaswinkel H."/>
            <person name="Reth M."/>
            <person name="Frey J."/>
        </authorList>
    </citation>
    <scope>PHOSPHORYLATION AT TYR-294 AND TYR-310</scope>
</reference>
<reference key="4">
    <citation type="journal article" date="2013" name="Protein Eng. Des. Sel.">
        <title>Engineered antibody Fc variant with selectively enhanced FcgammaRIIb binding over both FcgammaRIIa(R131) and FcgammaRIIa(H131).</title>
        <authorList>
            <person name="Mimoto F."/>
            <person name="Katada H."/>
            <person name="Kadono S."/>
            <person name="Igawa T."/>
            <person name="Kuramochi T."/>
            <person name="Muraoka M."/>
            <person name="Wada Y."/>
            <person name="Haraya K."/>
            <person name="Miyazaki T."/>
            <person name="Hattori K."/>
        </authorList>
    </citation>
    <scope>X-RAY CRYSTALLOGRAPHY (2.86 ANGSTROMS) OF 45-217</scope>
    <scope>DISULFIDE BONDS</scope>
    <scope>GLYCOSYLATION AT ASN-187</scope>
</reference>
<protein>
    <recommendedName>
        <fullName>Low affinity immunoglobulin gamma Fc region receptor II-c</fullName>
        <shortName>IgG Fc receptor II-c</shortName>
    </recommendedName>
    <alternativeName>
        <fullName>CDw32</fullName>
    </alternativeName>
    <alternativeName>
        <fullName>Fc-gamma RII-c</fullName>
        <shortName>Fc-gamma-RIIc</shortName>
        <shortName>FcRII-c</shortName>
    </alternativeName>
    <cdAntigenName>CD32</cdAntigenName>
</protein>
<evidence type="ECO:0000255" key="1"/>
<evidence type="ECO:0000255" key="2">
    <source>
        <dbReference type="PROSITE-ProRule" id="PRU00114"/>
    </source>
</evidence>
<evidence type="ECO:0000256" key="3">
    <source>
        <dbReference type="SAM" id="MobiDB-lite"/>
    </source>
</evidence>
<evidence type="ECO:0000269" key="4">
    <source>
    </source>
</evidence>
<evidence type="ECO:0000269" key="5">
    <source>
    </source>
</evidence>
<evidence type="ECO:0000303" key="6">
    <source>
    </source>
</evidence>
<evidence type="ECO:0000305" key="7"/>
<evidence type="ECO:0007829" key="8">
    <source>
        <dbReference type="PDB" id="3WJL"/>
    </source>
</evidence>
<dbReference type="EMBL" id="X17652">
    <property type="protein sequence ID" value="CAA35642.1"/>
    <property type="molecule type" value="mRNA"/>
</dbReference>
<dbReference type="EMBL" id="X17652">
    <property type="protein sequence ID" value="CAA35643.1"/>
    <property type="status" value="ALT_INIT"/>
    <property type="molecule type" value="mRNA"/>
</dbReference>
<dbReference type="EMBL" id="U90938">
    <property type="protein sequence ID" value="AAC12807.1"/>
    <property type="molecule type" value="mRNA"/>
</dbReference>
<dbReference type="EMBL" id="U90939">
    <property type="protein sequence ID" value="AAC12808.1"/>
    <property type="molecule type" value="mRNA"/>
</dbReference>
<dbReference type="EMBL" id="U90940">
    <property type="protein sequence ID" value="AAC12809.1"/>
    <property type="molecule type" value="mRNA"/>
</dbReference>
<dbReference type="EMBL" id="U90941">
    <property type="protein sequence ID" value="AAC12810.1"/>
    <property type="molecule type" value="mRNA"/>
</dbReference>
<dbReference type="PIR" id="S06946">
    <property type="entry name" value="S06946"/>
</dbReference>
<dbReference type="RefSeq" id="NP_963857.3">
    <property type="nucleotide sequence ID" value="NM_201563.5"/>
</dbReference>
<dbReference type="RefSeq" id="XP_011507594.1">
    <property type="nucleotide sequence ID" value="XM_011509292.2"/>
</dbReference>
<dbReference type="PDB" id="3WJL">
    <property type="method" value="X-ray"/>
    <property type="resolution" value="2.86 A"/>
    <property type="chains" value="C=45-217"/>
</dbReference>
<dbReference type="PDB" id="6YAX">
    <property type="method" value="X-ray"/>
    <property type="resolution" value="2.80 A"/>
    <property type="chains" value="AAA/BBB=43-217"/>
</dbReference>
<dbReference type="PDBsum" id="3WJL"/>
<dbReference type="PDBsum" id="6YAX"/>
<dbReference type="SMR" id="P31995"/>
<dbReference type="BioGRID" id="114556">
    <property type="interactions" value="2"/>
</dbReference>
<dbReference type="FunCoup" id="P31995">
    <property type="interactions" value="216"/>
</dbReference>
<dbReference type="IntAct" id="P31995">
    <property type="interactions" value="8"/>
</dbReference>
<dbReference type="DrugBank" id="DB00087">
    <property type="generic name" value="Alemtuzumab"/>
</dbReference>
<dbReference type="DrugBank" id="DB00112">
    <property type="generic name" value="Bevacizumab"/>
</dbReference>
<dbReference type="DrugBank" id="DB00111">
    <property type="generic name" value="Daclizumab"/>
</dbReference>
<dbReference type="DrugBank" id="DB00005">
    <property type="generic name" value="Etanercept"/>
</dbReference>
<dbReference type="DrugBank" id="DB00028">
    <property type="generic name" value="Human immunoglobulin G"/>
</dbReference>
<dbReference type="GlyCosmos" id="P31995">
    <property type="glycosylation" value="3 sites, No reported glycans"/>
</dbReference>
<dbReference type="GlyGen" id="P31995">
    <property type="glycosylation" value="5 sites"/>
</dbReference>
<dbReference type="iPTMnet" id="P31995"/>
<dbReference type="PhosphoSitePlus" id="P31995"/>
<dbReference type="BioMuta" id="FCGR2C"/>
<dbReference type="DMDM" id="399478"/>
<dbReference type="MassIVE" id="P31995"/>
<dbReference type="PeptideAtlas" id="P31995"/>
<dbReference type="ProteomicsDB" id="54825">
    <molecule id="P31995-1"/>
</dbReference>
<dbReference type="ProteomicsDB" id="54826">
    <molecule id="P31995-2"/>
</dbReference>
<dbReference type="ProteomicsDB" id="54827">
    <molecule id="P31995-3"/>
</dbReference>
<dbReference type="ProteomicsDB" id="54828">
    <molecule id="P31995-4"/>
</dbReference>
<dbReference type="Pumba" id="P31995"/>
<dbReference type="TopDownProteomics" id="P31995-4">
    <molecule id="P31995-4"/>
</dbReference>
<dbReference type="DNASU" id="9103"/>
<dbReference type="GeneID" id="9103"/>
<dbReference type="KEGG" id="hsa:9103"/>
<dbReference type="AGR" id="HGNC:15626"/>
<dbReference type="CTD" id="9103"/>
<dbReference type="DisGeNET" id="9103"/>
<dbReference type="GeneCards" id="FCGR2C"/>
<dbReference type="HGNC" id="HGNC:15626">
    <property type="gene designation" value="FCGR2C"/>
</dbReference>
<dbReference type="MalaCards" id="FCGR2C"/>
<dbReference type="MIM" id="612169">
    <property type="type" value="gene"/>
</dbReference>
<dbReference type="neXtProt" id="NX_P31995"/>
<dbReference type="Orphanet" id="3002">
    <property type="disease" value="Immune thrombocytopenia"/>
</dbReference>
<dbReference type="InParanoid" id="P31995"/>
<dbReference type="OrthoDB" id="6151406at2759"/>
<dbReference type="PAN-GO" id="P31995">
    <property type="GO annotations" value="4 GO annotations based on evolutionary models"/>
</dbReference>
<dbReference type="PhylomeDB" id="P31995"/>
<dbReference type="PathwayCommons" id="P31995"/>
<dbReference type="SignaLink" id="P31995"/>
<dbReference type="SIGNOR" id="P31995"/>
<dbReference type="BioGRID-ORCS" id="2213">
    <property type="hits" value="14 hits in 1145 CRISPR screens"/>
</dbReference>
<dbReference type="BioGRID-ORCS" id="9103">
    <property type="hits" value="1 hit in 128 CRISPR screens"/>
</dbReference>
<dbReference type="EvolutionaryTrace" id="P31995"/>
<dbReference type="Pharos" id="P31995">
    <property type="development level" value="Tdark"/>
</dbReference>
<dbReference type="PRO" id="PR:P31995"/>
<dbReference type="Proteomes" id="UP000005640">
    <property type="component" value="Unplaced"/>
</dbReference>
<dbReference type="RNAct" id="P31995">
    <property type="molecule type" value="protein"/>
</dbReference>
<dbReference type="GO" id="GO:0005737">
    <property type="term" value="C:cytoplasm"/>
    <property type="evidence" value="ECO:0007669"/>
    <property type="project" value="UniProtKB-SubCell"/>
</dbReference>
<dbReference type="GO" id="GO:0009897">
    <property type="term" value="C:external side of plasma membrane"/>
    <property type="evidence" value="ECO:0000318"/>
    <property type="project" value="GO_Central"/>
</dbReference>
<dbReference type="GO" id="GO:0016020">
    <property type="term" value="C:membrane"/>
    <property type="evidence" value="ECO:0000303"/>
    <property type="project" value="UniProtKB"/>
</dbReference>
<dbReference type="GO" id="GO:0019864">
    <property type="term" value="F:IgG binding"/>
    <property type="evidence" value="ECO:0000318"/>
    <property type="project" value="GO_Central"/>
</dbReference>
<dbReference type="GO" id="GO:0019770">
    <property type="term" value="F:IgG receptor activity"/>
    <property type="evidence" value="ECO:0000318"/>
    <property type="project" value="GO_Central"/>
</dbReference>
<dbReference type="GO" id="GO:0004888">
    <property type="term" value="F:transmembrane signaling receptor activity"/>
    <property type="evidence" value="ECO:0000303"/>
    <property type="project" value="UniProtKB"/>
</dbReference>
<dbReference type="GO" id="GO:0001788">
    <property type="term" value="P:antibody-dependent cellular cytotoxicity"/>
    <property type="evidence" value="ECO:0000318"/>
    <property type="project" value="GO_Central"/>
</dbReference>
<dbReference type="GO" id="GO:0007166">
    <property type="term" value="P:cell surface receptor signaling pathway"/>
    <property type="evidence" value="ECO:0000318"/>
    <property type="project" value="GO_Central"/>
</dbReference>
<dbReference type="GO" id="GO:0006955">
    <property type="term" value="P:immune response"/>
    <property type="evidence" value="ECO:0000303"/>
    <property type="project" value="UniProtKB"/>
</dbReference>
<dbReference type="GO" id="GO:0050766">
    <property type="term" value="P:positive regulation of phagocytosis"/>
    <property type="evidence" value="ECO:0000318"/>
    <property type="project" value="GO_Central"/>
</dbReference>
<dbReference type="GO" id="GO:0032760">
    <property type="term" value="P:positive regulation of tumor necrosis factor production"/>
    <property type="evidence" value="ECO:0000318"/>
    <property type="project" value="GO_Central"/>
</dbReference>
<dbReference type="CDD" id="cd05752">
    <property type="entry name" value="Ig1_FcgammaR_like"/>
    <property type="match status" value="1"/>
</dbReference>
<dbReference type="CDD" id="cd05753">
    <property type="entry name" value="Ig2_FcgammaR_like"/>
    <property type="match status" value="1"/>
</dbReference>
<dbReference type="FunFam" id="2.60.40.10:FF:000217">
    <property type="entry name" value="High affinity immunoglobulin gamma Fc receptor I"/>
    <property type="match status" value="1"/>
</dbReference>
<dbReference type="FunFam" id="2.60.40.10:FF:000356">
    <property type="entry name" value="Low affinity immunoglobulin gamma Fc region receptor III-A"/>
    <property type="match status" value="1"/>
</dbReference>
<dbReference type="Gene3D" id="2.60.40.10">
    <property type="entry name" value="Immunoglobulins"/>
    <property type="match status" value="2"/>
</dbReference>
<dbReference type="InterPro" id="IPR007110">
    <property type="entry name" value="Ig-like_dom"/>
</dbReference>
<dbReference type="InterPro" id="IPR036179">
    <property type="entry name" value="Ig-like_dom_sf"/>
</dbReference>
<dbReference type="InterPro" id="IPR013783">
    <property type="entry name" value="Ig-like_fold"/>
</dbReference>
<dbReference type="InterPro" id="IPR050488">
    <property type="entry name" value="Ig_Fc_receptor"/>
</dbReference>
<dbReference type="InterPro" id="IPR003599">
    <property type="entry name" value="Ig_sub"/>
</dbReference>
<dbReference type="InterPro" id="IPR003598">
    <property type="entry name" value="Ig_sub2"/>
</dbReference>
<dbReference type="PANTHER" id="PTHR11481">
    <property type="entry name" value="IMMUNOGLOBULIN FC RECEPTOR"/>
    <property type="match status" value="1"/>
</dbReference>
<dbReference type="PANTHER" id="PTHR11481:SF97">
    <property type="entry name" value="LOW AFFINITY IMMUNOGLOBULIN GAMMA FC REGION RECEPTOR II-B-RELATED"/>
    <property type="match status" value="1"/>
</dbReference>
<dbReference type="Pfam" id="PF13895">
    <property type="entry name" value="Ig_2"/>
    <property type="match status" value="2"/>
</dbReference>
<dbReference type="SMART" id="SM00409">
    <property type="entry name" value="IG"/>
    <property type="match status" value="2"/>
</dbReference>
<dbReference type="SMART" id="SM00408">
    <property type="entry name" value="IGc2"/>
    <property type="match status" value="2"/>
</dbReference>
<dbReference type="SUPFAM" id="SSF48726">
    <property type="entry name" value="Immunoglobulin"/>
    <property type="match status" value="2"/>
</dbReference>
<dbReference type="PROSITE" id="PS50835">
    <property type="entry name" value="IG_LIKE"/>
    <property type="match status" value="2"/>
</dbReference>
<name>FCG2C_HUMAN</name>
<proteinExistence type="evidence at protein level"/>
<feature type="signal peptide" evidence="1">
    <location>
        <begin position="1"/>
        <end position="42"/>
    </location>
</feature>
<feature type="chain" id="PRO_0000015148" description="Low affinity immunoglobulin gamma Fc region receptor II-c">
    <location>
        <begin position="43"/>
        <end position="323"/>
    </location>
</feature>
<feature type="topological domain" description="Extracellular" evidence="1">
    <location>
        <begin position="43"/>
        <end position="223"/>
    </location>
</feature>
<feature type="transmembrane region" description="Helical" evidence="1">
    <location>
        <begin position="224"/>
        <end position="246"/>
    </location>
</feature>
<feature type="topological domain" description="Cytoplasmic" evidence="1">
    <location>
        <begin position="247"/>
        <end position="323"/>
    </location>
</feature>
<feature type="domain" description="Ig-like C2-type 1">
    <location>
        <begin position="48"/>
        <end position="127"/>
    </location>
</feature>
<feature type="domain" description="Ig-like C2-type 2">
    <location>
        <begin position="131"/>
        <end position="213"/>
    </location>
</feature>
<feature type="region of interest" description="Disordered" evidence="3">
    <location>
        <begin position="277"/>
        <end position="323"/>
    </location>
</feature>
<feature type="modified residue" description="Phosphotyrosine; by SRC-type Tyr-kinases" evidence="5">
    <location>
        <position position="294"/>
    </location>
</feature>
<feature type="modified residue" description="Phosphotyrosine; by SRC-type Tyr-kinases" evidence="5">
    <location>
        <position position="310"/>
    </location>
</feature>
<feature type="glycosylation site" description="N-linked (GlcNAc...) asparagine" evidence="1">
    <location>
        <position position="106"/>
    </location>
</feature>
<feature type="glycosylation site" description="N-linked (GlcNAc...) asparagine" evidence="1">
    <location>
        <position position="180"/>
    </location>
</feature>
<feature type="glycosylation site" description="N-linked (GlcNAc...) asparagine" evidence="4">
    <location>
        <position position="187"/>
    </location>
</feature>
<feature type="disulfide bond" evidence="2 4">
    <location>
        <begin position="71"/>
        <end position="113"/>
    </location>
</feature>
<feature type="disulfide bond" evidence="2 4">
    <location>
        <begin position="152"/>
        <end position="196"/>
    </location>
</feature>
<feature type="splice variant" id="VSP_002644" description="In isoform IIC4." evidence="6">
    <original>APSSSPMGIIVAVVTGIAVAAIVAAVVALIYCRKKRISANSTDPVKAAQFEPPGRQMIAIRKRQPEETNNDYETADGGYMTLNPRAPTDDDKNIYLTLPPNDHVNSNN</original>
    <variation>GPRLRTAAKQSSLVGAEVP</variation>
    <location>
        <begin position="216"/>
        <end position="323"/>
    </location>
</feature>
<feature type="splice variant" id="VSP_002645" description="In isoform IIC3." evidence="6">
    <original>NSTDPVKAAQFEPPGRQMIAIRKRQPEETNNDYETADGGYMTLNPRAPTDDDKNIYLTLPPNDHVNSNN</original>
    <variation>TWTSNDCHQKETT</variation>
    <location>
        <begin position="255"/>
        <end position="323"/>
    </location>
</feature>
<feature type="splice variant" id="VSP_002646" description="In isoform IIC2." evidence="6">
    <original>PPGRQMIAIRKRQPEETNNDYETADGGYMTLNPRAPTDDDKNIYLTLPPNDHVNSNN</original>
    <variation>MLSCSHLDVK</variation>
    <location>
        <begin position="267"/>
        <end position="323"/>
    </location>
</feature>
<feature type="sequence conflict" description="In Ref. 2; AAC12810." evidence="7" ref="2">
    <original>R</original>
    <variation>K</variation>
    <location>
        <position position="151"/>
    </location>
</feature>
<feature type="sequence conflict" description="In Ref. 2; AAC12809." evidence="7" ref="2">
    <original>T</original>
    <variation>I</variation>
    <location>
        <position position="164"/>
    </location>
</feature>
<feature type="strand" evidence="8">
    <location>
        <begin position="51"/>
        <end position="53"/>
    </location>
</feature>
<feature type="strand" evidence="8">
    <location>
        <begin position="59"/>
        <end position="62"/>
    </location>
</feature>
<feature type="strand" evidence="8">
    <location>
        <begin position="66"/>
        <end position="72"/>
    </location>
</feature>
<feature type="strand" evidence="8">
    <location>
        <begin position="83"/>
        <end position="86"/>
    </location>
</feature>
<feature type="strand" evidence="8">
    <location>
        <begin position="89"/>
        <end position="91"/>
    </location>
</feature>
<feature type="strand" evidence="8">
    <location>
        <begin position="96"/>
        <end position="102"/>
    </location>
</feature>
<feature type="helix" evidence="8">
    <location>
        <begin position="105"/>
        <end position="107"/>
    </location>
</feature>
<feature type="strand" evidence="8">
    <location>
        <begin position="109"/>
        <end position="114"/>
    </location>
</feature>
<feature type="strand" evidence="8">
    <location>
        <begin position="116"/>
        <end position="119"/>
    </location>
</feature>
<feature type="strand" evidence="8">
    <location>
        <begin position="124"/>
        <end position="129"/>
    </location>
</feature>
<feature type="strand" evidence="8">
    <location>
        <begin position="131"/>
        <end position="136"/>
    </location>
</feature>
<feature type="strand" evidence="8">
    <location>
        <begin position="140"/>
        <end position="143"/>
    </location>
</feature>
<feature type="strand" evidence="8">
    <location>
        <begin position="148"/>
        <end position="154"/>
    </location>
</feature>
<feature type="helix" evidence="8">
    <location>
        <begin position="155"/>
        <end position="157"/>
    </location>
</feature>
<feature type="strand" evidence="8">
    <location>
        <begin position="161"/>
        <end position="167"/>
    </location>
</feature>
<feature type="strand" evidence="8">
    <location>
        <begin position="170"/>
        <end position="177"/>
    </location>
</feature>
<feature type="strand" evidence="8">
    <location>
        <begin position="180"/>
        <end position="185"/>
    </location>
</feature>
<feature type="helix" evidence="8">
    <location>
        <begin position="188"/>
        <end position="190"/>
    </location>
</feature>
<feature type="strand" evidence="8">
    <location>
        <begin position="192"/>
        <end position="200"/>
    </location>
</feature>
<feature type="strand" evidence="8">
    <location>
        <begin position="203"/>
        <end position="206"/>
    </location>
</feature>
<feature type="strand" evidence="8">
    <location>
        <begin position="210"/>
        <end position="215"/>
    </location>
</feature>
<gene>
    <name type="primary">FCGR2C</name>
    <name type="synonym">CD32</name>
    <name type="synonym">FCG2</name>
    <name type="synonym">IGFR2</name>
</gene>
<accession>P31995</accession>
<accession>O00523</accession>
<accession>O00524</accession>
<accession>O00525</accession>
<sequence>MGILSFLPVLATESDWADCKSPQPWGHMLLWTAVLFLAPVAGTPAAPPKAVLKLEPQWINVLQEDSVTLTCRGTHSPESDSIQWFHNGNLIPTHTQPSYRFKANNNDSGEYTCQTGQTSLSDPVHLTVLSEWLVLQTPHLEFQEGETIVLRCHSWKDKPLVKVTFFQNGKSKKFSRSDPNFSIPQANHSHSGDYHCTGNIGYTLYSSKPVTITVQAPSSSPMGIIVAVVTGIAVAAIVAAVVALIYCRKKRISANSTDPVKAAQFEPPGRQMIAIRKRQPEETNNDYETADGGYMTLNPRAPTDDDKNIYLTLPPNDHVNSNN</sequence>
<comment type="function">
    <text>Receptor for the Fc region of complexed immunoglobulins gamma. Low affinity receptor. Involved in a variety of effector and regulatory functions such as phagocytosis of immune complexes and modulation of antibody production by B-cells.</text>
</comment>
<comment type="interaction">
    <interactant intactId="EBI-1396036">
        <id>P31995</id>
    </interactant>
    <interactant intactId="EBI-1395983">
        <id>P02741</id>
        <label>CRP</label>
    </interactant>
    <organismsDiffer>false</organismsDiffer>
    <experiments>2</experiments>
</comment>
<comment type="interaction">
    <interactant intactId="EBI-1396036">
        <id>P31995</id>
    </interactant>
    <interactant intactId="EBI-389883">
        <id>P16333</id>
        <label>NCK1</label>
    </interactant>
    <organismsDiffer>false</organismsDiffer>
    <experiments>2</experiments>
</comment>
<comment type="subcellular location">
    <molecule>Isoform IIC4</molecule>
    <subcellularLocation>
        <location evidence="7">Cytoplasm</location>
    </subcellularLocation>
</comment>
<comment type="subcellular location">
    <molecule>Isoform IIC3</molecule>
    <subcellularLocation>
        <location>Cell membrane</location>
        <topology>Single-pass type I membrane protein</topology>
    </subcellularLocation>
</comment>
<comment type="subcellular location">
    <molecule>Isoform IIC2</molecule>
    <subcellularLocation>
        <location>Cell membrane</location>
        <topology>Single-pass type I membrane protein</topology>
    </subcellularLocation>
</comment>
<comment type="subcellular location">
    <molecule>Isoform IIC1</molecule>
    <subcellularLocation>
        <location>Cell membrane</location>
        <topology>Single-pass type I membrane protein</topology>
    </subcellularLocation>
</comment>
<comment type="alternative products">
    <event type="alternative splicing"/>
    <isoform>
        <id>P31995-1</id>
        <name>IIC1</name>
        <name>C1</name>
        <sequence type="displayed"/>
    </isoform>
    <isoform>
        <id>P31995-2</id>
        <name>IIC2</name>
        <sequence type="described" ref="VSP_002646"/>
    </isoform>
    <isoform>
        <id>P31995-3</id>
        <name>IIC3</name>
        <sequence type="described" ref="VSP_002645"/>
    </isoform>
    <isoform>
        <id>P31995-4</id>
        <name>IIC4</name>
        <sequence type="described" ref="VSP_002644"/>
    </isoform>
</comment>
<comment type="tissue specificity">
    <text>Isoform IIC1 is detected in monocytes, macrophages, polymorphonuclear cells and natural killer cells.</text>
</comment>
<comment type="domain">
    <text>Contains an intracytoplasmic twice repeated motif referred as immunoreceptor tyrosine-based activator motif (ITAM). These motifs are involved in triggering cell activation upon receptors aggregation.</text>
</comment>
<comment type="PTM">
    <text evidence="5">Phosphorylated by SRC-type Tyr-kinases such as LYN, BLK, FYN and SYK.</text>
</comment>
<comment type="caution">
    <text evidence="7">Has sometimes been attributed to correspond to FcR-IIB.</text>
</comment>
<comment type="caution">
    <text evidence="7">FCGR2C is both a gene and a pseudogene in the human population, the reference genome corresponding currently to the non-functional allele with a stop codon at position 57. The sequence shown here with a Gln at that position is the one of the functional protein.</text>
</comment>
<comment type="sequence caution" evidence="7">
    <conflict type="erroneous initiation">
        <sequence resource="EMBL-CDS" id="CAA35643"/>
    </conflict>
</comment>
<keyword id="KW-0002">3D-structure</keyword>
<keyword id="KW-0025">Alternative splicing</keyword>
<keyword id="KW-1003">Cell membrane</keyword>
<keyword id="KW-0963">Cytoplasm</keyword>
<keyword id="KW-1015">Disulfide bond</keyword>
<keyword id="KW-0325">Glycoprotein</keyword>
<keyword id="KW-0390">IgG-binding protein</keyword>
<keyword id="KW-0393">Immunoglobulin domain</keyword>
<keyword id="KW-0472">Membrane</keyword>
<keyword id="KW-0597">Phosphoprotein</keyword>
<keyword id="KW-1267">Proteomics identification</keyword>
<keyword id="KW-0675">Receptor</keyword>
<keyword id="KW-1185">Reference proteome</keyword>
<keyword id="KW-0677">Repeat</keyword>
<keyword id="KW-0732">Signal</keyword>
<keyword id="KW-0812">Transmembrane</keyword>
<keyword id="KW-1133">Transmembrane helix</keyword>
<organism>
    <name type="scientific">Homo sapiens</name>
    <name type="common">Human</name>
    <dbReference type="NCBI Taxonomy" id="9606"/>
    <lineage>
        <taxon>Eukaryota</taxon>
        <taxon>Metazoa</taxon>
        <taxon>Chordata</taxon>
        <taxon>Craniata</taxon>
        <taxon>Vertebrata</taxon>
        <taxon>Euteleostomi</taxon>
        <taxon>Mammalia</taxon>
        <taxon>Eutheria</taxon>
        <taxon>Euarchontoglires</taxon>
        <taxon>Primates</taxon>
        <taxon>Haplorrhini</taxon>
        <taxon>Catarrhini</taxon>
        <taxon>Hominidae</taxon>
        <taxon>Homo</taxon>
    </lineage>
</organism>